<protein>
    <recommendedName>
        <fullName>N-terminal-borealin-like protein</fullName>
    </recommendedName>
</protein>
<accession>Q3E7Y6</accession>
<accession>D3DLE8</accession>
<organism>
    <name type="scientific">Saccharomyces cerevisiae (strain ATCC 204508 / S288c)</name>
    <name type="common">Baker's yeast</name>
    <dbReference type="NCBI Taxonomy" id="559292"/>
    <lineage>
        <taxon>Eukaryota</taxon>
        <taxon>Fungi</taxon>
        <taxon>Dikarya</taxon>
        <taxon>Ascomycota</taxon>
        <taxon>Saccharomycotina</taxon>
        <taxon>Saccharomycetes</taxon>
        <taxon>Saccharomycetales</taxon>
        <taxon>Saccharomycetaceae</taxon>
        <taxon>Saccharomyces</taxon>
    </lineage>
</organism>
<gene>
    <name type="primary">NBL1</name>
    <name type="ordered locus">YHR199C-A</name>
</gene>
<proteinExistence type="evidence at protein level"/>
<evidence type="ECO:0000269" key="1">
    <source>
    </source>
</evidence>
<evidence type="ECO:0000305" key="2"/>
<feature type="chain" id="PRO_0000245397" description="N-terminal-borealin-like protein">
    <location>
        <begin position="1"/>
        <end position="73"/>
    </location>
</feature>
<dbReference type="EMBL" id="U00030">
    <property type="status" value="NOT_ANNOTATED_CDS"/>
    <property type="molecule type" value="Genomic_DNA"/>
</dbReference>
<dbReference type="EMBL" id="BK006934">
    <property type="protein sequence ID" value="DAA06892.1"/>
    <property type="molecule type" value="Genomic_DNA"/>
</dbReference>
<dbReference type="RefSeq" id="NP_976247.1">
    <property type="nucleotide sequence ID" value="NM_001184671.1"/>
</dbReference>
<dbReference type="SMR" id="Q3E7Y6"/>
<dbReference type="BioGRID" id="37086">
    <property type="interactions" value="55"/>
</dbReference>
<dbReference type="ComplexPortal" id="CPX-1900">
    <property type="entry name" value="Chromosomal passenger complex"/>
</dbReference>
<dbReference type="FunCoup" id="Q3E7Y6">
    <property type="interactions" value="15"/>
</dbReference>
<dbReference type="IntAct" id="Q3E7Y6">
    <property type="interactions" value="3"/>
</dbReference>
<dbReference type="STRING" id="4932.YHR199C-A"/>
<dbReference type="iPTMnet" id="Q3E7Y6"/>
<dbReference type="PaxDb" id="4932-YHR199C-A"/>
<dbReference type="PeptideAtlas" id="Q3E7Y6"/>
<dbReference type="EnsemblFungi" id="YHR199C-A_mRNA">
    <property type="protein sequence ID" value="YHR199C-A"/>
    <property type="gene ID" value="YHR199C-A"/>
</dbReference>
<dbReference type="GeneID" id="2746858"/>
<dbReference type="KEGG" id="sce:YHR199C-A"/>
<dbReference type="AGR" id="SGD:S000029704"/>
<dbReference type="SGD" id="S000029704">
    <property type="gene designation" value="NBL1"/>
</dbReference>
<dbReference type="VEuPathDB" id="FungiDB:YHR199C-A"/>
<dbReference type="HOGENOM" id="CLU_2706256_0_0_1"/>
<dbReference type="InParanoid" id="Q3E7Y6"/>
<dbReference type="OrthoDB" id="4051786at2759"/>
<dbReference type="BioCyc" id="YEAST:G3O-31280-MONOMER"/>
<dbReference type="BioGRID-ORCS" id="2746858">
    <property type="hits" value="10 hits in 10 CRISPR screens"/>
</dbReference>
<dbReference type="ChiTaRS" id="NBL1">
    <property type="organism name" value="yeast"/>
</dbReference>
<dbReference type="PRO" id="PR:Q3E7Y6"/>
<dbReference type="Proteomes" id="UP000002311">
    <property type="component" value="Chromosome VIII"/>
</dbReference>
<dbReference type="RNAct" id="Q3E7Y6">
    <property type="molecule type" value="protein"/>
</dbReference>
<dbReference type="GO" id="GO:0032133">
    <property type="term" value="C:chromosome passenger complex"/>
    <property type="evidence" value="ECO:0000314"/>
    <property type="project" value="SGD"/>
</dbReference>
<dbReference type="GO" id="GO:0005737">
    <property type="term" value="C:cytoplasm"/>
    <property type="evidence" value="ECO:0007669"/>
    <property type="project" value="UniProtKB-KW"/>
</dbReference>
<dbReference type="GO" id="GO:0005634">
    <property type="term" value="C:nucleus"/>
    <property type="evidence" value="ECO:0007669"/>
    <property type="project" value="UniProtKB-SubCell"/>
</dbReference>
<dbReference type="GO" id="GO:0005819">
    <property type="term" value="C:spindle"/>
    <property type="evidence" value="ECO:0007669"/>
    <property type="project" value="UniProtKB-SubCell"/>
</dbReference>
<dbReference type="GO" id="GO:0030674">
    <property type="term" value="F:protein-macromolecule adaptor activity"/>
    <property type="evidence" value="ECO:0000314"/>
    <property type="project" value="SGD"/>
</dbReference>
<dbReference type="GO" id="GO:0051316">
    <property type="term" value="P:attachment of meiotic spindle microtubules to kinetochore"/>
    <property type="evidence" value="ECO:0000303"/>
    <property type="project" value="ComplexPortal"/>
</dbReference>
<dbReference type="GO" id="GO:0007059">
    <property type="term" value="P:chromosome segregation"/>
    <property type="evidence" value="ECO:0000315"/>
    <property type="project" value="SGD"/>
</dbReference>
<dbReference type="GO" id="GO:0090267">
    <property type="term" value="P:positive regulation of mitotic cell cycle spindle assembly checkpoint"/>
    <property type="evidence" value="ECO:0000303"/>
    <property type="project" value="ComplexPortal"/>
</dbReference>
<dbReference type="GO" id="GO:0031134">
    <property type="term" value="P:sister chromatid biorientation"/>
    <property type="evidence" value="ECO:0000303"/>
    <property type="project" value="ComplexPortal"/>
</dbReference>
<sequence length="73" mass="8547">MIPALTPEERQKLRSAILHRMQLELETTEKLIENIKEETLKKLNLLQQPDATSAPQSKELIREVLEQEGRRIE</sequence>
<comment type="function">
    <text evidence="1">Component of the aurora kinase complex, also called chromosomal passenger complex (CPC), essential for chromosome segregation and metaphase chromosome alignment. Mediates the SLI15-BIR1 interaction within the CPC.</text>
</comment>
<comment type="subunit">
    <text evidence="1">Component of the aurora kinase complex composed of at least BIR1, BNL1, IPL1 and SLI15.</text>
</comment>
<comment type="interaction">
    <interactant intactId="EBI-9513736">
        <id>Q3E7Y6</id>
    </interactant>
    <interactant intactId="EBI-3648">
        <id>P47134</id>
        <label>BIR1</label>
    </interactant>
    <organismsDiffer>false</organismsDiffer>
    <experiments>5</experiments>
</comment>
<comment type="interaction">
    <interactant intactId="EBI-9513736">
        <id>Q3E7Y6</id>
    </interactant>
    <interactant intactId="EBI-20842">
        <id>P38283</id>
        <label>SLI15</label>
    </interactant>
    <organismsDiffer>false</organismsDiffer>
    <experiments>5</experiments>
</comment>
<comment type="subcellular location">
    <subcellularLocation>
        <location evidence="1">Nucleus</location>
    </subcellularLocation>
    <subcellularLocation>
        <location evidence="1">Cytoplasm</location>
        <location evidence="1">Cytoskeleton</location>
        <location evidence="1">Spindle</location>
    </subcellularLocation>
    <text>In G1, localizes along nuclear microtubules and at spindle poles. In late S phase to metaphase, is seen as a few small nuclear foci and also localizes diffusely within the nucleus. Also found along the spindle in early anaphase, at the spindle midzone in late anaphase, and finally concentrated at the plus ends of depolymerizing microtubules before mitotic exit.</text>
</comment>
<comment type="similarity">
    <text evidence="2">Belongs to the borealin family.</text>
</comment>
<name>NBL1_YEAST</name>
<reference key="1">
    <citation type="journal article" date="1994" name="Science">
        <title>Complete nucleotide sequence of Saccharomyces cerevisiae chromosome VIII.</title>
        <authorList>
            <person name="Johnston M."/>
            <person name="Andrews S."/>
            <person name="Brinkman R."/>
            <person name="Cooper J."/>
            <person name="Ding H."/>
            <person name="Dover J."/>
            <person name="Du Z."/>
            <person name="Favello A."/>
            <person name="Fulton L."/>
            <person name="Gattung S."/>
            <person name="Geisel C."/>
            <person name="Kirsten J."/>
            <person name="Kucaba T."/>
            <person name="Hillier L.W."/>
            <person name="Jier M."/>
            <person name="Johnston L."/>
            <person name="Langston Y."/>
            <person name="Latreille P."/>
            <person name="Louis E.J."/>
            <person name="Macri C."/>
            <person name="Mardis E."/>
            <person name="Menezes S."/>
            <person name="Mouser L."/>
            <person name="Nhan M."/>
            <person name="Rifkin L."/>
            <person name="Riles L."/>
            <person name="St Peter H."/>
            <person name="Trevaskis E."/>
            <person name="Vaughan K."/>
            <person name="Vignati D."/>
            <person name="Wilcox L."/>
            <person name="Wohldman P."/>
            <person name="Waterston R."/>
            <person name="Wilson R."/>
            <person name="Vaudin M."/>
        </authorList>
    </citation>
    <scope>NUCLEOTIDE SEQUENCE [LARGE SCALE GENOMIC DNA]</scope>
    <source>
        <strain>ATCC 204508 / S288c</strain>
    </source>
</reference>
<reference key="2">
    <citation type="journal article" date="2014" name="G3 (Bethesda)">
        <title>The reference genome sequence of Saccharomyces cerevisiae: Then and now.</title>
        <authorList>
            <person name="Engel S.R."/>
            <person name="Dietrich F.S."/>
            <person name="Fisk D.G."/>
            <person name="Binkley G."/>
            <person name="Balakrishnan R."/>
            <person name="Costanzo M.C."/>
            <person name="Dwight S.S."/>
            <person name="Hitz B.C."/>
            <person name="Karra K."/>
            <person name="Nash R.S."/>
            <person name="Weng S."/>
            <person name="Wong E.D."/>
            <person name="Lloyd P."/>
            <person name="Skrzypek M.S."/>
            <person name="Miyasato S.R."/>
            <person name="Simison M."/>
            <person name="Cherry J.M."/>
        </authorList>
    </citation>
    <scope>GENOME REANNOTATION</scope>
    <source>
        <strain>ATCC 204508 / S288c</strain>
    </source>
</reference>
<reference key="3">
    <citation type="journal article" date="2003" name="Science">
        <title>Finding functional features in Saccharomyces genomes by phylogenetic footprinting.</title>
        <authorList>
            <person name="Cliften P.F."/>
            <person name="Sudarsanam P."/>
            <person name="Desikan A."/>
            <person name="Fulton L."/>
            <person name="Fulton B."/>
            <person name="Majors J."/>
            <person name="Waterston R."/>
            <person name="Cohen B.A."/>
            <person name="Johnston M."/>
        </authorList>
    </citation>
    <scope>GENOME REANNOTATION</scope>
</reference>
<reference key="4">
    <citation type="journal article" date="2009" name="Mol. Biol. Cell">
        <title>Nbl1p: a Borealin/Dasra/CSC-1-like protein essential for Aurora/Ipl1 complex function and integrity in Saccharomyces cerevisiae.</title>
        <authorList>
            <person name="Nakajima Y."/>
            <person name="Tyers R.G."/>
            <person name="Wong C.C."/>
            <person name="Yates J.R. III"/>
            <person name="Drubin D.G."/>
            <person name="Barnes G."/>
        </authorList>
    </citation>
    <scope>IDENTIFICATION IN THE AURORA KINASE COMPLEX</scope>
    <scope>IDENTIFICATION BY MASS SPECTROMETRY</scope>
    <scope>FUNCTION</scope>
    <scope>SUBCELLULAR LOCATION</scope>
</reference>
<keyword id="KW-0963">Cytoplasm</keyword>
<keyword id="KW-0206">Cytoskeleton</keyword>
<keyword id="KW-0539">Nucleus</keyword>
<keyword id="KW-1185">Reference proteome</keyword>